<evidence type="ECO:0000255" key="1">
    <source>
        <dbReference type="HAMAP-Rule" id="MF_02002"/>
    </source>
</evidence>
<protein>
    <recommendedName>
        <fullName evidence="1">Isoleucine--tRNA ligase</fullName>
        <ecNumber evidence="1">6.1.1.5</ecNumber>
    </recommendedName>
    <alternativeName>
        <fullName evidence="1">Isoleucyl-tRNA synthetase</fullName>
        <shortName evidence="1">IleRS</shortName>
    </alternativeName>
</protein>
<feature type="chain" id="PRO_0000098447" description="Isoleucine--tRNA ligase">
    <location>
        <begin position="1"/>
        <end position="943"/>
    </location>
</feature>
<feature type="short sequence motif" description="'HIGH' region">
    <location>
        <begin position="58"/>
        <end position="68"/>
    </location>
</feature>
<feature type="short sequence motif" description="'KMSKS' region">
    <location>
        <begin position="608"/>
        <end position="612"/>
    </location>
</feature>
<feature type="binding site" evidence="1">
    <location>
        <position position="567"/>
    </location>
    <ligand>
        <name>L-isoleucyl-5'-AMP</name>
        <dbReference type="ChEBI" id="CHEBI:178002"/>
    </ligand>
</feature>
<feature type="binding site" evidence="1">
    <location>
        <position position="611"/>
    </location>
    <ligand>
        <name>ATP</name>
        <dbReference type="ChEBI" id="CHEBI:30616"/>
    </ligand>
</feature>
<feature type="binding site" evidence="1">
    <location>
        <position position="906"/>
    </location>
    <ligand>
        <name>Zn(2+)</name>
        <dbReference type="ChEBI" id="CHEBI:29105"/>
    </ligand>
</feature>
<feature type="binding site" evidence="1">
    <location>
        <position position="909"/>
    </location>
    <ligand>
        <name>Zn(2+)</name>
        <dbReference type="ChEBI" id="CHEBI:29105"/>
    </ligand>
</feature>
<feature type="binding site" evidence="1">
    <location>
        <position position="926"/>
    </location>
    <ligand>
        <name>Zn(2+)</name>
        <dbReference type="ChEBI" id="CHEBI:29105"/>
    </ligand>
</feature>
<feature type="binding site" evidence="1">
    <location>
        <position position="929"/>
    </location>
    <ligand>
        <name>Zn(2+)</name>
        <dbReference type="ChEBI" id="CHEBI:29105"/>
    </ligand>
</feature>
<gene>
    <name evidence="1" type="primary">ileS</name>
    <name type="ordered locus">PP_0603</name>
</gene>
<dbReference type="EC" id="6.1.1.5" evidence="1"/>
<dbReference type="EMBL" id="AE015451">
    <property type="protein sequence ID" value="AAN66229.1"/>
    <property type="molecule type" value="Genomic_DNA"/>
</dbReference>
<dbReference type="RefSeq" id="NP_742765.1">
    <property type="nucleotide sequence ID" value="NC_002947.4"/>
</dbReference>
<dbReference type="RefSeq" id="WP_010951869.1">
    <property type="nucleotide sequence ID" value="NZ_CP169744.1"/>
</dbReference>
<dbReference type="SMR" id="Q88Q92"/>
<dbReference type="STRING" id="160488.PP_0603"/>
<dbReference type="PaxDb" id="160488-PP_0603"/>
<dbReference type="KEGG" id="ppu:PP_0603"/>
<dbReference type="PATRIC" id="fig|160488.4.peg.643"/>
<dbReference type="eggNOG" id="COG0060">
    <property type="taxonomic scope" value="Bacteria"/>
</dbReference>
<dbReference type="HOGENOM" id="CLU_001493_7_1_6"/>
<dbReference type="OrthoDB" id="9810365at2"/>
<dbReference type="PhylomeDB" id="Q88Q92"/>
<dbReference type="BioCyc" id="PPUT160488:G1G01-660-MONOMER"/>
<dbReference type="Proteomes" id="UP000000556">
    <property type="component" value="Chromosome"/>
</dbReference>
<dbReference type="GO" id="GO:0005829">
    <property type="term" value="C:cytosol"/>
    <property type="evidence" value="ECO:0007669"/>
    <property type="project" value="TreeGrafter"/>
</dbReference>
<dbReference type="GO" id="GO:0002161">
    <property type="term" value="F:aminoacyl-tRNA deacylase activity"/>
    <property type="evidence" value="ECO:0007669"/>
    <property type="project" value="InterPro"/>
</dbReference>
<dbReference type="GO" id="GO:0005524">
    <property type="term" value="F:ATP binding"/>
    <property type="evidence" value="ECO:0007669"/>
    <property type="project" value="UniProtKB-UniRule"/>
</dbReference>
<dbReference type="GO" id="GO:0004822">
    <property type="term" value="F:isoleucine-tRNA ligase activity"/>
    <property type="evidence" value="ECO:0007669"/>
    <property type="project" value="UniProtKB-UniRule"/>
</dbReference>
<dbReference type="GO" id="GO:0000049">
    <property type="term" value="F:tRNA binding"/>
    <property type="evidence" value="ECO:0007669"/>
    <property type="project" value="InterPro"/>
</dbReference>
<dbReference type="GO" id="GO:0008270">
    <property type="term" value="F:zinc ion binding"/>
    <property type="evidence" value="ECO:0007669"/>
    <property type="project" value="UniProtKB-UniRule"/>
</dbReference>
<dbReference type="GO" id="GO:0006428">
    <property type="term" value="P:isoleucyl-tRNA aminoacylation"/>
    <property type="evidence" value="ECO:0007669"/>
    <property type="project" value="UniProtKB-UniRule"/>
</dbReference>
<dbReference type="CDD" id="cd07960">
    <property type="entry name" value="Anticodon_Ia_Ile_BEm"/>
    <property type="match status" value="1"/>
</dbReference>
<dbReference type="CDD" id="cd00818">
    <property type="entry name" value="IleRS_core"/>
    <property type="match status" value="1"/>
</dbReference>
<dbReference type="FunFam" id="1.10.730.20:FF:000001">
    <property type="entry name" value="Isoleucine--tRNA ligase"/>
    <property type="match status" value="1"/>
</dbReference>
<dbReference type="FunFam" id="3.40.50.620:FF:000042">
    <property type="entry name" value="Isoleucine--tRNA ligase"/>
    <property type="match status" value="1"/>
</dbReference>
<dbReference type="FunFam" id="3.40.50.620:FF:000048">
    <property type="entry name" value="Isoleucine--tRNA ligase"/>
    <property type="match status" value="1"/>
</dbReference>
<dbReference type="Gene3D" id="1.10.730.20">
    <property type="match status" value="1"/>
</dbReference>
<dbReference type="Gene3D" id="3.40.50.620">
    <property type="entry name" value="HUPs"/>
    <property type="match status" value="2"/>
</dbReference>
<dbReference type="Gene3D" id="3.90.740.10">
    <property type="entry name" value="Valyl/Leucyl/Isoleucyl-tRNA synthetase, editing domain"/>
    <property type="match status" value="1"/>
</dbReference>
<dbReference type="HAMAP" id="MF_02002">
    <property type="entry name" value="Ile_tRNA_synth_type1"/>
    <property type="match status" value="1"/>
</dbReference>
<dbReference type="InterPro" id="IPR001412">
    <property type="entry name" value="aa-tRNA-synth_I_CS"/>
</dbReference>
<dbReference type="InterPro" id="IPR002300">
    <property type="entry name" value="aa-tRNA-synth_Ia"/>
</dbReference>
<dbReference type="InterPro" id="IPR033708">
    <property type="entry name" value="Anticodon_Ile_BEm"/>
</dbReference>
<dbReference type="InterPro" id="IPR002301">
    <property type="entry name" value="Ile-tRNA-ligase"/>
</dbReference>
<dbReference type="InterPro" id="IPR023585">
    <property type="entry name" value="Ile-tRNA-ligase_type1"/>
</dbReference>
<dbReference type="InterPro" id="IPR050081">
    <property type="entry name" value="Ile-tRNA_ligase"/>
</dbReference>
<dbReference type="InterPro" id="IPR013155">
    <property type="entry name" value="M/V/L/I-tRNA-synth_anticd-bd"/>
</dbReference>
<dbReference type="InterPro" id="IPR014729">
    <property type="entry name" value="Rossmann-like_a/b/a_fold"/>
</dbReference>
<dbReference type="InterPro" id="IPR009080">
    <property type="entry name" value="tRNAsynth_Ia_anticodon-bd"/>
</dbReference>
<dbReference type="InterPro" id="IPR009008">
    <property type="entry name" value="Val/Leu/Ile-tRNA-synth_edit"/>
</dbReference>
<dbReference type="InterPro" id="IPR010663">
    <property type="entry name" value="Znf_FPG/IleRS"/>
</dbReference>
<dbReference type="NCBIfam" id="TIGR00392">
    <property type="entry name" value="ileS"/>
    <property type="match status" value="1"/>
</dbReference>
<dbReference type="PANTHER" id="PTHR42765:SF1">
    <property type="entry name" value="ISOLEUCINE--TRNA LIGASE, MITOCHONDRIAL"/>
    <property type="match status" value="1"/>
</dbReference>
<dbReference type="PANTHER" id="PTHR42765">
    <property type="entry name" value="SOLEUCYL-TRNA SYNTHETASE"/>
    <property type="match status" value="1"/>
</dbReference>
<dbReference type="Pfam" id="PF08264">
    <property type="entry name" value="Anticodon_1"/>
    <property type="match status" value="1"/>
</dbReference>
<dbReference type="Pfam" id="PF00133">
    <property type="entry name" value="tRNA-synt_1"/>
    <property type="match status" value="1"/>
</dbReference>
<dbReference type="Pfam" id="PF06827">
    <property type="entry name" value="zf-FPG_IleRS"/>
    <property type="match status" value="1"/>
</dbReference>
<dbReference type="PRINTS" id="PR00984">
    <property type="entry name" value="TRNASYNTHILE"/>
</dbReference>
<dbReference type="SUPFAM" id="SSF47323">
    <property type="entry name" value="Anticodon-binding domain of a subclass of class I aminoacyl-tRNA synthetases"/>
    <property type="match status" value="1"/>
</dbReference>
<dbReference type="SUPFAM" id="SSF52374">
    <property type="entry name" value="Nucleotidylyl transferase"/>
    <property type="match status" value="1"/>
</dbReference>
<dbReference type="SUPFAM" id="SSF50677">
    <property type="entry name" value="ValRS/IleRS/LeuRS editing domain"/>
    <property type="match status" value="1"/>
</dbReference>
<dbReference type="PROSITE" id="PS00178">
    <property type="entry name" value="AA_TRNA_LIGASE_I"/>
    <property type="match status" value="1"/>
</dbReference>
<sequence>MTDYKATLNLPDTAFPMKAGLPQREPQILQRWDSIGLYQKLREIGKDRPKFVLHDGPPYANGKIHIGHALNKILKDMIVRSKTLAGFDAPYVPGWDCHGLPIEHKVEVTHGKHLSADRTRELCREYAAEQIEGQKTEFIRLGVLGDWDNPYKTMNFANEAGEIRALAEMVKQGFVFKGLKPVNWCFDCGSALAEAEVEYADKKSQTIDVAFPVADEAKLAAAFGLASLAKPAAIVIWTTTPWTIPANQALNIHPEFKYALVDTGERLLVLAEELVESCLKRYNLEGSVVASAQGSALELINFRHPFYDRLSPIYLADYVELGAGTGVVHSSPAYGEDDFVTCKRYGMVNDDILTPVQSNGVYVDSLPFFGGQFIWKANPAIVEKLSEVGALMHTETISHSYMHCWRHKTPLIYRATAQWFVGMDKQPSTGEPLRERALKAIEDTKFVPAWGQARLHAMIANRPDWCISRQRNWGVPIPFFLHKQTGDLHPRTVELMEEVAKRVEQQGIEAWFKLDAAELLGAEADQYDKIADTLDVWFDSGTTHWHVLRGSHDIGHATGPRADLYLEGSDQHRGWFHSSLLTGCAIDNHAPYRELLTHGFTVDENGRKMSKSLGNTIEPEKVNNTLGADILRLWVSATDYSGEMAVSEQILQRSADAYRRIRNTARFLLSNLSGFDPARDLLAPEDMLALDRWAVDRTLLLQRELEEHYSEYRFWNVYSKVHNFCVQELGGFYLDIIKDRQYTTGANSVARRSCQTALYHISEALVRWIAPILAFTADEIWQYLPGERNESVMLNGWYQGLSELPEGTELDRAYWDRVMAVKASVNKELENQRTAKVIGGNLQAEVTLYADEGLSADLGKLGDELRFVLITSAASVVPFAQAPAEAVATEVEGLKLQVVKSGHTKCGRCWHFRADVGSHPEHPEICGRCVDNLTGSGEVRHYA</sequence>
<organism>
    <name type="scientific">Pseudomonas putida (strain ATCC 47054 / DSM 6125 / CFBP 8728 / NCIMB 11950 / KT2440)</name>
    <dbReference type="NCBI Taxonomy" id="160488"/>
    <lineage>
        <taxon>Bacteria</taxon>
        <taxon>Pseudomonadati</taxon>
        <taxon>Pseudomonadota</taxon>
        <taxon>Gammaproteobacteria</taxon>
        <taxon>Pseudomonadales</taxon>
        <taxon>Pseudomonadaceae</taxon>
        <taxon>Pseudomonas</taxon>
    </lineage>
</organism>
<name>SYI_PSEPK</name>
<comment type="function">
    <text evidence="1">Catalyzes the attachment of isoleucine to tRNA(Ile). As IleRS can inadvertently accommodate and process structurally similar amino acids such as valine, to avoid such errors it has two additional distinct tRNA(Ile)-dependent editing activities. One activity is designated as 'pretransfer' editing and involves the hydrolysis of activated Val-AMP. The other activity is designated 'posttransfer' editing and involves deacylation of mischarged Val-tRNA(Ile).</text>
</comment>
<comment type="catalytic activity">
    <reaction evidence="1">
        <text>tRNA(Ile) + L-isoleucine + ATP = L-isoleucyl-tRNA(Ile) + AMP + diphosphate</text>
        <dbReference type="Rhea" id="RHEA:11060"/>
        <dbReference type="Rhea" id="RHEA-COMP:9666"/>
        <dbReference type="Rhea" id="RHEA-COMP:9695"/>
        <dbReference type="ChEBI" id="CHEBI:30616"/>
        <dbReference type="ChEBI" id="CHEBI:33019"/>
        <dbReference type="ChEBI" id="CHEBI:58045"/>
        <dbReference type="ChEBI" id="CHEBI:78442"/>
        <dbReference type="ChEBI" id="CHEBI:78528"/>
        <dbReference type="ChEBI" id="CHEBI:456215"/>
        <dbReference type="EC" id="6.1.1.5"/>
    </reaction>
</comment>
<comment type="cofactor">
    <cofactor evidence="1">
        <name>Zn(2+)</name>
        <dbReference type="ChEBI" id="CHEBI:29105"/>
    </cofactor>
    <text evidence="1">Binds 1 zinc ion per subunit.</text>
</comment>
<comment type="subunit">
    <text evidence="1">Monomer.</text>
</comment>
<comment type="subcellular location">
    <subcellularLocation>
        <location evidence="1">Cytoplasm</location>
    </subcellularLocation>
</comment>
<comment type="domain">
    <text evidence="1">IleRS has two distinct active sites: one for aminoacylation and one for editing. The misactivated valine is translocated from the active site to the editing site, which sterically excludes the correctly activated isoleucine. The single editing site contains two valyl binding pockets, one specific for each substrate (Val-AMP or Val-tRNA(Ile)).</text>
</comment>
<comment type="similarity">
    <text evidence="1">Belongs to the class-I aminoacyl-tRNA synthetase family. IleS type 1 subfamily.</text>
</comment>
<accession>Q88Q92</accession>
<proteinExistence type="inferred from homology"/>
<keyword id="KW-0030">Aminoacyl-tRNA synthetase</keyword>
<keyword id="KW-0067">ATP-binding</keyword>
<keyword id="KW-0963">Cytoplasm</keyword>
<keyword id="KW-0436">Ligase</keyword>
<keyword id="KW-0479">Metal-binding</keyword>
<keyword id="KW-0547">Nucleotide-binding</keyword>
<keyword id="KW-0648">Protein biosynthesis</keyword>
<keyword id="KW-1185">Reference proteome</keyword>
<keyword id="KW-0862">Zinc</keyword>
<reference key="1">
    <citation type="journal article" date="2002" name="Environ. Microbiol.">
        <title>Complete genome sequence and comparative analysis of the metabolically versatile Pseudomonas putida KT2440.</title>
        <authorList>
            <person name="Nelson K.E."/>
            <person name="Weinel C."/>
            <person name="Paulsen I.T."/>
            <person name="Dodson R.J."/>
            <person name="Hilbert H."/>
            <person name="Martins dos Santos V.A.P."/>
            <person name="Fouts D.E."/>
            <person name="Gill S.R."/>
            <person name="Pop M."/>
            <person name="Holmes M."/>
            <person name="Brinkac L.M."/>
            <person name="Beanan M.J."/>
            <person name="DeBoy R.T."/>
            <person name="Daugherty S.C."/>
            <person name="Kolonay J.F."/>
            <person name="Madupu R."/>
            <person name="Nelson W.C."/>
            <person name="White O."/>
            <person name="Peterson J.D."/>
            <person name="Khouri H.M."/>
            <person name="Hance I."/>
            <person name="Chris Lee P."/>
            <person name="Holtzapple E.K."/>
            <person name="Scanlan D."/>
            <person name="Tran K."/>
            <person name="Moazzez A."/>
            <person name="Utterback T.R."/>
            <person name="Rizzo M."/>
            <person name="Lee K."/>
            <person name="Kosack D."/>
            <person name="Moestl D."/>
            <person name="Wedler H."/>
            <person name="Lauber J."/>
            <person name="Stjepandic D."/>
            <person name="Hoheisel J."/>
            <person name="Straetz M."/>
            <person name="Heim S."/>
            <person name="Kiewitz C."/>
            <person name="Eisen J.A."/>
            <person name="Timmis K.N."/>
            <person name="Duesterhoeft A."/>
            <person name="Tuemmler B."/>
            <person name="Fraser C.M."/>
        </authorList>
    </citation>
    <scope>NUCLEOTIDE SEQUENCE [LARGE SCALE GENOMIC DNA]</scope>
    <source>
        <strain>ATCC 47054 / DSM 6125 / CFBP 8728 / NCIMB 11950 / KT2440</strain>
    </source>
</reference>